<comment type="function">
    <text evidence="6 9 10 11 12 14 17">Component of the subcortical maternal complex (SCMC), a multiprotein complex that plays a key role in early embryonic development (PubMed:11062459, PubMed:18804437, PubMed:25208553, PubMed:37922900). The SCMC complex is a structural constituent of cytoplasmic lattices, which consist in fibrous structures found in the cytoplasm of oocytes and preimplantation embryos (PubMed:37922900). They are required to store maternal proteins critical for embryonic development, such as proteins that control epigenetic reprogramming of the preimplantation embryo, and prevent their degradation or activation (PubMed:37922900). Required for the localization of cortical granules to the cortex of oocytes, via association with the cortical actin scaffold (PubMed:31118423). Required for cortical actin clearance prior to oocyte exocytosis and prevention of polyspermy (PubMed:31118423). Involved in regulating post-fertilization Ca(2+) release and endoplasmic reticulum storage (ER) storage via regulation of cellular localization (PubMed:24374158). May be involved in the localization of mitochondria to the cytoplasm and perinuclear region in oocytes and early stage embryos, independent of its role in CPL formation (PubMed:22357545).</text>
</comment>
<comment type="subunit">
    <text evidence="1 8 9 11 12 13 15 17 18">Component of the subcortical maternal complex (SCMC), at least composed of NLRP5, KHDC3, OOEP, and TLE6 (PubMed:18057100, PubMed:18804437, PubMed:28992324, PubMed:31575650, PubMed:37922900, PubMed:38177687). Within the complex, interacts with OOEP, KHDC3 and TLE6 (PubMed:18057100, PubMed:18804437, PubMed:28992324, PubMed:31575650). The SCMC may facilitate translocation of its components between the nuclear and cytoplasmic compartments (By similarity). As part of the SCMC interacts with the SCMC-associated protein ZBED3 (PubMed:28992324). As part of the SCMC interacts with the SCMC-associated protein CFL1/Cofilin-1 (PubMed:25208553). Interacts with PRKCE (By similarity). Interacts with TUBB3 at cytoskeleton microtubules (PubMed:24374158).</text>
</comment>
<comment type="interaction">
    <interactant intactId="EBI-2905719">
        <id>Q9R1M5</id>
    </interactant>
    <interactant intactId="EBI-2905804">
        <id>Q9CWU5</id>
        <label>Khdc3</label>
    </interactant>
    <organismsDiffer>false</organismsDiffer>
    <experiments>3</experiments>
</comment>
<comment type="subcellular location">
    <subcellularLocation>
        <location evidence="7 13 15 17">Cytoplasm</location>
    </subcellularLocation>
    <subcellularLocation>
        <location evidence="8">Cytoplasmic vesicle</location>
        <location evidence="8">Secretory vesicle</location>
        <location evidence="8">Cortical granule</location>
    </subcellularLocation>
    <subcellularLocation>
        <location evidence="7">Mitochondrion</location>
    </subcellularLocation>
    <subcellularLocation>
        <location evidence="7">Nucleus</location>
        <location evidence="7">Nucleolus</location>
    </subcellularLocation>
    <subcellularLocation>
        <location evidence="1">Golgi apparatus</location>
    </subcellularLocation>
    <text evidence="7 12 13 15 17">Core component of cytoplasmic lattices in oocytes (PubMed:37922900). In the subcortical cytoplasm of early embryos from the 1-cell to the blastocyst stages (PubMed:14670992, PubMed:25208553). From the 2-cell stage, still detected in the subcortex, but excluded from cell-cell contact regions (PubMed:14670992). Expression largely disappears in blastocysts (PubMed:25208553). Located in mitochondria and nucleoli in primary follicle oocytes (PubMed:14670992). Colocalizes with ZBED3 and NLRP4F in the oocyte subcortex (PubMed:25208553, PubMed:28992324, PubMed:31575650). Not detected in oocyte mitochondria in type 2 follicles (PubMed:14670992).</text>
</comment>
<comment type="alternative products">
    <event type="alternative splicing"/>
    <isoform>
        <id>Q9R1M5-1</id>
        <name>1</name>
        <name>D</name>
        <sequence type="displayed"/>
    </isoform>
    <isoform>
        <id>Q9R1M5-2</id>
        <name>2</name>
        <name>C</name>
        <sequence type="described" ref="VSP_024728"/>
    </isoform>
    <isoform>
        <id>Q9R1M5-3</id>
        <name>3</name>
        <name>B</name>
        <sequence type="described" ref="VSP_024727"/>
    </isoform>
    <isoform>
        <id>Q9R1M5-4</id>
        <name>4</name>
        <name>A</name>
        <sequence type="described" ref="VSP_024726"/>
    </isoform>
    <isoform>
        <id>Q9R1M5-5</id>
        <name>5</name>
        <name>E</name>
        <sequence type="described" ref="VSP_024727 VSP_024729"/>
    </isoform>
    <isoform>
        <id>Q9R1M5-6</id>
        <name>6</name>
        <name>G</name>
        <sequence type="described" ref="VSP_024727 VSP_024733"/>
    </isoform>
    <isoform>
        <id>Q9R1M5-7</id>
        <name>7</name>
        <name>H</name>
        <sequence type="described" ref="VSP_024727 VSP_024731 VSP_024732"/>
    </isoform>
    <isoform>
        <id>Q9R1M5-8</id>
        <name>8</name>
        <name>F</name>
        <sequence type="described" ref="VSP_024727 VSP_024730"/>
    </isoform>
</comment>
<comment type="developmental stage">
    <text evidence="4 7 9 13 14 15">Expression is first detected in oocytes of type 3A primary follicles (PubMed:14670992, PubMed:31118423). Transcripts accumulate during oogenesis (PubMed:14670992). Expressed in the cytoplasm of germinal vesicle oocytes before becoming concentrated in the subcortex of metaphase 2 oocytes (PubMed:28992324, PubMed:31118423). During meiotic maturation, the vast majority of the transcripts are degraded and virtually none is detected by 2-cell stage embryogenesis (PubMed:14670992, PubMed:18804437). The protein however persists during preimplantation up to the blastocyst stage (PubMed:14670992, PubMed:18804437). At 2-cell stage, excluded from cell-cell contact regions (PubMed:18804437). Continuous exclusion from these regions during preimplantation development leads to the absence of the protein from the inner cells of the morula and the inner cell mass of the blastocyst (PubMed:18804437). Expressed in ovaries at birth, expression peaks at postnatal day 10 (P10), expression is then decreased at P17 and further decreased at P21 (PubMed:10433232, PubMed:31575650).</text>
</comment>
<comment type="induction">
    <text evidence="16">(Microbial infection) Reduced by T.gondii in the testes and uterus.</text>
</comment>
<comment type="PTM">
    <text evidence="1">Phosphorylated by PRKCE.</text>
</comment>
<comment type="disruption phenotype">
    <text evidence="7 10 11 12 13 14">Mice appear phenotypically normal with no apparent defects in ovarian development, oocyte maturation or ovulation (PubMed:14670992, PubMed:22357545). Cortical granules are scattered throughout the cytoplasm in oocytes and ovulated eggs (PubMed:31118423). Reduced abundance of intact MYH9/MyoIIA and MYO5A, the dense cortical actin scaffold remained present prior to exocytosis (PubMed:31118423). Increase in polyspermy in the perivitelline space resulting from a decrease in efficacy of the zona pellucida block. Increase in multiple pronuclei and delay in cortical granule exocytosis and ZP2 cleavage (PubMed:31118423). Embryos form unequal sized blastomeres due to smaller, dysmorphic, and displaced mitotic spindles resulting in asymmetric division (PubMed:25208553). Increase in apoptotic cells in blastomeres which progress beyond the 8-cell stage (PubMed:22357545). Decrease in thickness of subcortical F-actin in zygotes, thickening of F-actin bundles in the cytoplasm and loss of F-actin cytoplasmic lattices (PubMed:25208553). Increase in subcortical mitochondrial clustering of mitochondria in 2-cell embryos (PubMed:22357545). Increase in mitochondria activity, shown by an increase in membrane potential and reactive oxygen species (PubMed:22357545). Decrease in expression of the SCMC-associated protein ZBED3 in the cytoplasm of oocytes (PubMed:28992324). In knockdown mice M2 oocytes show a diffuse ER distribution pattern with a reduced number of cortical ER clusters and random movement of lipid droplets during oocyte maturation (PubMed:24374158). Reduces tubulin localization to the cellular microtubular architecture (PubMed:24374158). Decrease in storage and release of Ca(2+) from the endoplasmic reticulum, and disruption of Ca(2+) oscillations following oocyte fertilization (PubMed:24374158). diffused localization of ITPR1/IP3R-1 throughout the cytoplasm with reduced clustering at the oocyte cortex (PubMed:24374158).</text>
</comment>
<comment type="similarity">
    <text evidence="25">Belongs to the NLRP family.</text>
</comment>
<feature type="chain" id="PRO_0000080891" description="NACHT, LRR and PYD domains-containing protein 5">
    <location>
        <begin position="1"/>
        <end position="1163"/>
    </location>
</feature>
<feature type="domain" description="NACHT" evidence="2">
    <location>
        <begin position="243"/>
        <end position="565"/>
    </location>
</feature>
<feature type="repeat" description="LRR 1">
    <location>
        <begin position="801"/>
        <end position="822"/>
    </location>
</feature>
<feature type="repeat" description="LRR 2">
    <location>
        <begin position="830"/>
        <end position="851"/>
    </location>
</feature>
<feature type="repeat" description="LRR 3">
    <location>
        <begin position="858"/>
        <end position="878"/>
    </location>
</feature>
<feature type="repeat" description="LRR 4">
    <location>
        <begin position="887"/>
        <end position="906"/>
    </location>
</feature>
<feature type="repeat" description="LRR 5">
    <location>
        <begin position="915"/>
        <end position="935"/>
    </location>
</feature>
<feature type="repeat" description="LRR 6">
    <location>
        <begin position="944"/>
        <end position="964"/>
    </location>
</feature>
<feature type="repeat" description="LRR 7">
    <location>
        <begin position="972"/>
        <end position="993"/>
    </location>
</feature>
<feature type="repeat" description="LRR 8">
    <location>
        <begin position="1001"/>
        <end position="1022"/>
    </location>
</feature>
<feature type="repeat" description="LRR 9">
    <location>
        <begin position="1029"/>
        <end position="1050"/>
    </location>
</feature>
<feature type="repeat" description="LRR 10">
    <location>
        <begin position="1058"/>
        <end position="1079"/>
    </location>
</feature>
<feature type="repeat" description="LRR 11">
    <location>
        <begin position="1086"/>
        <end position="1107"/>
    </location>
</feature>
<feature type="region of interest" description="Disordered" evidence="3">
    <location>
        <begin position="1"/>
        <end position="201"/>
    </location>
</feature>
<feature type="compositionally biased region" description="Basic and acidic residues" evidence="3">
    <location>
        <begin position="1"/>
        <end position="42"/>
    </location>
</feature>
<feature type="compositionally biased region" description="Basic and acidic residues" evidence="3">
    <location>
        <begin position="56"/>
        <end position="94"/>
    </location>
</feature>
<feature type="compositionally biased region" description="Basic and acidic residues" evidence="3">
    <location>
        <begin position="108"/>
        <end position="127"/>
    </location>
</feature>
<feature type="compositionally biased region" description="Polar residues" evidence="3">
    <location>
        <begin position="128"/>
        <end position="137"/>
    </location>
</feature>
<feature type="compositionally biased region" description="Basic and acidic residues" evidence="3">
    <location>
        <begin position="153"/>
        <end position="173"/>
    </location>
</feature>
<feature type="binding site" evidence="2">
    <location>
        <begin position="249"/>
        <end position="256"/>
    </location>
    <ligand>
        <name>ATP</name>
        <dbReference type="ChEBI" id="CHEBI:30616"/>
    </ligand>
</feature>
<feature type="splice variant" id="VSP_024726" description="In isoform 4." evidence="21">
    <location>
        <begin position="1"/>
        <end position="104"/>
    </location>
</feature>
<feature type="splice variant" id="VSP_024727" description="In isoform 3, isoform 5, isoform 6, isoform 7 and isoform 8." evidence="19 21 22 23">
    <location>
        <begin position="1"/>
        <end position="52"/>
    </location>
</feature>
<feature type="splice variant" id="VSP_024728" description="In isoform 2." evidence="21">
    <original>RKMTSPENDSKSIQKDQGPEQEQTSESTMGPPEKESKAILKARGLEEEQK</original>
    <variation>STMSPSENVSRAILKDSGSEEVEQA</variation>
    <location>
        <begin position="25"/>
        <end position="74"/>
    </location>
</feature>
<feature type="splice variant" id="VSP_024729" description="In isoform 5." evidence="22">
    <location>
        <begin position="181"/>
        <end position="196"/>
    </location>
</feature>
<feature type="splice variant" id="VSP_024730" description="In isoform 8." evidence="22">
    <location>
        <begin position="780"/>
        <end position="1163"/>
    </location>
</feature>
<feature type="splice variant" id="VSP_024731" description="In isoform 7." evidence="22">
    <original>NNALG</original>
    <variation>WGHVS</variation>
    <location>
        <begin position="1037"/>
        <end position="1041"/>
    </location>
</feature>
<feature type="splice variant" id="VSP_024732" description="In isoform 7." evidence="22">
    <location>
        <begin position="1042"/>
        <end position="1163"/>
    </location>
</feature>
<feature type="splice variant" id="VSP_024733" description="In isoform 6." evidence="22">
    <location>
        <begin position="1065"/>
        <end position="1090"/>
    </location>
</feature>
<feature type="sequence variant" description="In strain: 129/Sv and CBA/J." evidence="5">
    <original>E</original>
    <variation>D</variation>
    <location>
        <position position="59"/>
    </location>
</feature>
<feature type="sequence variant" description="In strain: 129/Sv; requires 2 nucleotide substitutions." evidence="5">
    <original>G</original>
    <variation>L</variation>
    <location>
        <position position="94"/>
    </location>
</feature>
<feature type="sequence variant" description="In strain: 129/Sv and CBA/J." evidence="5">
    <original>R</original>
    <variation>K</variation>
    <location>
        <position position="139"/>
    </location>
</feature>
<feature type="sequence variant" description="In strain: A/J.">
    <original>V</original>
    <variation>G</variation>
    <location>
        <position position="283"/>
    </location>
</feature>
<feature type="sequence variant" description="In strain: 129/Sv and CBA/J." evidence="5">
    <original>L</original>
    <variation>P</variation>
    <location>
        <position position="308"/>
    </location>
</feature>
<feature type="sequence variant" description="In strain: A/J.">
    <original>S</original>
    <variation>T</variation>
    <location>
        <position position="341"/>
    </location>
</feature>
<feature type="sequence variant" description="In strain: 129/Sv and CBA/J." evidence="5">
    <original>H</original>
    <variation>Q</variation>
    <location>
        <position position="1029"/>
    </location>
</feature>
<feature type="sequence variant" description="In strain: 129/Sv and CBA/J." evidence="5">
    <original>SS</original>
    <variation>NN</variation>
    <location>
        <begin position="1055"/>
        <end position="1056"/>
    </location>
</feature>
<feature type="mutagenesis site" description="Impaired formation of the subcortical maternal complex (SCMC)." evidence="18">
    <original>H</original>
    <variation>C</variation>
    <location>
        <position position="425"/>
    </location>
</feature>
<feature type="mutagenesis site" description="Impaired formation of the subcortical maternal complex (SCMC)." evidence="18">
    <original>R</original>
    <variation>C</variation>
    <location>
        <position position="597"/>
    </location>
</feature>
<feature type="mutagenesis site" description="Impaired formation of the subcortical maternal complex (SCMC)." evidence="18">
    <original>L</original>
    <variation>R</variation>
    <location>
        <position position="602"/>
    </location>
</feature>
<feature type="mutagenesis site" description="Impaired formation of the subcortical maternal complex (SCMC)." evidence="18">
    <original>S</original>
    <variation>I</variation>
    <location>
        <position position="656"/>
    </location>
</feature>
<feature type="mutagenesis site" description="Decreased interaction with TLE6." evidence="18">
    <original>L</original>
    <variation>R</variation>
    <location>
        <position position="729"/>
    </location>
</feature>
<feature type="mutagenesis site" description="Decreased interaction with TLE6." evidence="18">
    <original>C</original>
    <variation>R</variation>
    <location>
        <position position="737"/>
    </location>
</feature>
<feature type="mutagenesis site" description="Decreased interaction with TLE6." evidence="18">
    <original>L</original>
    <variation>P</variation>
    <location>
        <position position="910"/>
    </location>
</feature>
<feature type="mutagenesis site" description="Decreased interaction with TLE6." evidence="18">
    <original>T</original>
    <variation>I</variation>
    <location>
        <position position="1070"/>
    </location>
</feature>
<feature type="mutagenesis site" description="Decreased interaction with TLE6." evidence="18">
    <original>L</original>
    <variation>P</variation>
    <location>
        <position position="1077"/>
    </location>
</feature>
<feature type="mutagenesis site" description="Does not affect interaction with TLE6." evidence="18">
    <original>L</original>
    <variation>W</variation>
    <location>
        <position position="1079"/>
    </location>
</feature>
<feature type="sequence conflict" description="In Ref. 5; AAH53384." evidence="25" ref="5">
    <original>E</original>
    <variation>G</variation>
    <location>
        <position position="567"/>
    </location>
</feature>
<feature type="helix" evidence="34">
    <location>
        <begin position="202"/>
        <end position="212"/>
    </location>
</feature>
<feature type="turn" evidence="35">
    <location>
        <begin position="213"/>
        <end position="215"/>
    </location>
</feature>
<feature type="strand" evidence="34">
    <location>
        <begin position="217"/>
        <end position="219"/>
    </location>
</feature>
<feature type="helix" evidence="34">
    <location>
        <begin position="226"/>
        <end position="232"/>
    </location>
</feature>
<feature type="strand" evidence="34">
    <location>
        <begin position="236"/>
        <end position="239"/>
    </location>
</feature>
<feature type="strand" evidence="34">
    <location>
        <begin position="244"/>
        <end position="249"/>
    </location>
</feature>
<feature type="helix" evidence="34">
    <location>
        <begin position="255"/>
        <end position="266"/>
    </location>
</feature>
<feature type="strand" evidence="34">
    <location>
        <begin position="269"/>
        <end position="271"/>
    </location>
</feature>
<feature type="strand" evidence="34">
    <location>
        <begin position="278"/>
        <end position="282"/>
    </location>
</feature>
<feature type="helix" evidence="34">
    <location>
        <begin position="283"/>
        <end position="285"/>
    </location>
</feature>
<feature type="strand" evidence="34">
    <location>
        <begin position="288"/>
        <end position="292"/>
    </location>
</feature>
<feature type="helix" evidence="34">
    <location>
        <begin position="294"/>
        <end position="301"/>
    </location>
</feature>
<feature type="strand" evidence="35">
    <location>
        <begin position="302"/>
        <end position="304"/>
    </location>
</feature>
<feature type="helix" evidence="34">
    <location>
        <begin position="306"/>
        <end position="314"/>
    </location>
</feature>
<feature type="helix" evidence="32">
    <location>
        <begin position="315"/>
        <end position="317"/>
    </location>
</feature>
<feature type="strand" evidence="34">
    <location>
        <begin position="320"/>
        <end position="324"/>
    </location>
</feature>
<feature type="helix" evidence="34">
    <location>
        <begin position="328"/>
        <end position="330"/>
    </location>
</feature>
<feature type="strand" evidence="34">
    <location>
        <begin position="343"/>
        <end position="345"/>
    </location>
</feature>
<feature type="helix" evidence="34">
    <location>
        <begin position="350"/>
        <end position="358"/>
    </location>
</feature>
<feature type="strand" evidence="34">
    <location>
        <begin position="361"/>
        <end position="363"/>
    </location>
</feature>
<feature type="strand" evidence="34">
    <location>
        <begin position="367"/>
        <end position="371"/>
    </location>
</feature>
<feature type="helix" evidence="34">
    <location>
        <begin position="374"/>
        <end position="376"/>
    </location>
</feature>
<feature type="turn" evidence="34">
    <location>
        <begin position="378"/>
        <end position="383"/>
    </location>
</feature>
<feature type="strand" evidence="34">
    <location>
        <begin position="384"/>
        <end position="386"/>
    </location>
</feature>
<feature type="strand" evidence="34">
    <location>
        <begin position="388"/>
        <end position="393"/>
    </location>
</feature>
<feature type="helix" evidence="34">
    <location>
        <begin position="397"/>
        <end position="407"/>
    </location>
</feature>
<feature type="strand" evidence="35">
    <location>
        <begin position="411"/>
        <end position="413"/>
    </location>
</feature>
<feature type="helix" evidence="34">
    <location>
        <begin position="414"/>
        <end position="423"/>
    </location>
</feature>
<feature type="helix" evidence="34">
    <location>
        <begin position="425"/>
        <end position="430"/>
    </location>
</feature>
<feature type="helix" evidence="34">
    <location>
        <begin position="434"/>
        <end position="449"/>
    </location>
</feature>
<feature type="turn" evidence="32">
    <location>
        <begin position="450"/>
        <end position="453"/>
    </location>
</feature>
<feature type="strand" evidence="34">
    <location>
        <begin position="458"/>
        <end position="460"/>
    </location>
</feature>
<feature type="helix" evidence="34">
    <location>
        <begin position="461"/>
        <end position="476"/>
    </location>
</feature>
<feature type="strand" evidence="34">
    <location>
        <begin position="477"/>
        <end position="480"/>
    </location>
</feature>
<feature type="helix" evidence="34">
    <location>
        <begin position="485"/>
        <end position="504"/>
    </location>
</feature>
<feature type="helix" evidence="34">
    <location>
        <begin position="511"/>
        <end position="516"/>
    </location>
</feature>
<feature type="helix" evidence="34">
    <location>
        <begin position="521"/>
        <end position="528"/>
    </location>
</feature>
<feature type="strand" evidence="34">
    <location>
        <begin position="533"/>
        <end position="536"/>
    </location>
</feature>
<feature type="strand" evidence="34">
    <location>
        <begin position="538"/>
        <end position="541"/>
    </location>
</feature>
<feature type="strand" evidence="34">
    <location>
        <begin position="543"/>
        <end position="545"/>
    </location>
</feature>
<feature type="helix" evidence="34">
    <location>
        <begin position="549"/>
        <end position="562"/>
    </location>
</feature>
<feature type="strand" evidence="33">
    <location>
        <begin position="563"/>
        <end position="566"/>
    </location>
</feature>
<feature type="helix" evidence="34">
    <location>
        <begin position="568"/>
        <end position="571"/>
    </location>
</feature>
<feature type="helix" evidence="35">
    <location>
        <begin position="576"/>
        <end position="579"/>
    </location>
</feature>
<feature type="helix" evidence="34">
    <location>
        <begin position="590"/>
        <end position="592"/>
    </location>
</feature>
<feature type="helix" evidence="34">
    <location>
        <begin position="593"/>
        <end position="601"/>
    </location>
</feature>
<feature type="helix" evidence="34">
    <location>
        <begin position="605"/>
        <end position="615"/>
    </location>
</feature>
<feature type="helix" evidence="34">
    <location>
        <begin position="623"/>
        <end position="635"/>
    </location>
</feature>
<feature type="helix" evidence="34">
    <location>
        <begin position="643"/>
        <end position="655"/>
    </location>
</feature>
<feature type="helix" evidence="34">
    <location>
        <begin position="659"/>
        <end position="665"/>
    </location>
</feature>
<feature type="strand" evidence="32">
    <location>
        <begin position="666"/>
        <end position="668"/>
    </location>
</feature>
<feature type="strand" evidence="34">
    <location>
        <begin position="672"/>
        <end position="675"/>
    </location>
</feature>
<feature type="helix" evidence="34">
    <location>
        <begin position="679"/>
        <end position="689"/>
    </location>
</feature>
<feature type="strand" evidence="34">
    <location>
        <begin position="698"/>
        <end position="701"/>
    </location>
</feature>
<feature type="strand" evidence="31">
    <location>
        <begin position="707"/>
        <end position="709"/>
    </location>
</feature>
<feature type="strand" evidence="35">
    <location>
        <begin position="712"/>
        <end position="714"/>
    </location>
</feature>
<feature type="strand" evidence="34">
    <location>
        <begin position="715"/>
        <end position="718"/>
    </location>
</feature>
<feature type="strand" evidence="34">
    <location>
        <begin position="720"/>
        <end position="722"/>
    </location>
</feature>
<feature type="helix" evidence="34">
    <location>
        <begin position="728"/>
        <end position="742"/>
    </location>
</feature>
<feature type="strand" evidence="34">
    <location>
        <begin position="748"/>
        <end position="750"/>
    </location>
</feature>
<feature type="helix" evidence="34">
    <location>
        <begin position="758"/>
        <end position="768"/>
    </location>
</feature>
<feature type="strand" evidence="33">
    <location>
        <begin position="770"/>
        <end position="772"/>
    </location>
</feature>
<feature type="strand" evidence="34">
    <location>
        <begin position="777"/>
        <end position="779"/>
    </location>
</feature>
<feature type="helix" evidence="34">
    <location>
        <begin position="786"/>
        <end position="788"/>
    </location>
</feature>
<feature type="helix" evidence="34">
    <location>
        <begin position="789"/>
        <end position="796"/>
    </location>
</feature>
<feature type="strand" evidence="35">
    <location>
        <begin position="804"/>
        <end position="806"/>
    </location>
</feature>
<feature type="helix" evidence="34">
    <location>
        <begin position="814"/>
        <end position="824"/>
    </location>
</feature>
<feature type="strand" evidence="34">
    <location>
        <begin position="833"/>
        <end position="835"/>
    </location>
</feature>
<feature type="helix" evidence="34">
    <location>
        <begin position="843"/>
        <end position="854"/>
    </location>
</feature>
<feature type="strand" evidence="34">
    <location>
        <begin position="861"/>
        <end position="863"/>
    </location>
</feature>
<feature type="helix" evidence="34">
    <location>
        <begin position="871"/>
        <end position="882"/>
    </location>
</feature>
<feature type="strand" evidence="34">
    <location>
        <begin position="890"/>
        <end position="892"/>
    </location>
</feature>
<feature type="helix" evidence="34">
    <location>
        <begin position="900"/>
        <end position="910"/>
    </location>
</feature>
<feature type="strand" evidence="34">
    <location>
        <begin position="918"/>
        <end position="920"/>
    </location>
</feature>
<feature type="helix" evidence="34">
    <location>
        <begin position="928"/>
        <end position="939"/>
    </location>
</feature>
<feature type="strand" evidence="34">
    <location>
        <begin position="940"/>
        <end position="942"/>
    </location>
</feature>
<feature type="strand" evidence="34">
    <location>
        <begin position="947"/>
        <end position="949"/>
    </location>
</feature>
<feature type="strand" evidence="34">
    <location>
        <begin position="951"/>
        <end position="953"/>
    </location>
</feature>
<feature type="helix" evidence="34">
    <location>
        <begin position="958"/>
        <end position="968"/>
    </location>
</feature>
<feature type="strand" evidence="34">
    <location>
        <begin position="975"/>
        <end position="977"/>
    </location>
</feature>
<feature type="helix" evidence="34">
    <location>
        <begin position="985"/>
        <end position="996"/>
    </location>
</feature>
<feature type="strand" evidence="34">
    <location>
        <begin position="997"/>
        <end position="1000"/>
    </location>
</feature>
<feature type="strand" evidence="34">
    <location>
        <begin position="1004"/>
        <end position="1006"/>
    </location>
</feature>
<feature type="strand" evidence="34">
    <location>
        <begin position="1008"/>
        <end position="1010"/>
    </location>
</feature>
<feature type="helix" evidence="34">
    <location>
        <begin position="1014"/>
        <end position="1016"/>
    </location>
</feature>
<feature type="helix" evidence="34">
    <location>
        <begin position="1017"/>
        <end position="1026"/>
    </location>
</feature>
<feature type="strand" evidence="32">
    <location>
        <begin position="1032"/>
        <end position="1034"/>
    </location>
</feature>
<feature type="helix" evidence="34">
    <location>
        <begin position="1041"/>
        <end position="1052"/>
    </location>
</feature>
<feature type="strand" evidence="34">
    <location>
        <begin position="1061"/>
        <end position="1063"/>
    </location>
</feature>
<feature type="turn" evidence="35">
    <location>
        <begin position="1071"/>
        <end position="1073"/>
    </location>
</feature>
<feature type="helix" evidence="34">
    <location>
        <begin position="1074"/>
        <end position="1082"/>
    </location>
</feature>
<feature type="strand" evidence="34">
    <location>
        <begin position="1089"/>
        <end position="1091"/>
    </location>
</feature>
<feature type="helix" evidence="34">
    <location>
        <begin position="1099"/>
        <end position="1109"/>
    </location>
</feature>
<feature type="strand" evidence="34">
    <location>
        <begin position="1118"/>
        <end position="1120"/>
    </location>
</feature>
<feature type="helix" evidence="34">
    <location>
        <begin position="1123"/>
        <end position="1125"/>
    </location>
</feature>
<feature type="helix" evidence="34">
    <location>
        <begin position="1128"/>
        <end position="1140"/>
    </location>
</feature>
<feature type="strand" evidence="32">
    <location>
        <begin position="1145"/>
        <end position="1148"/>
    </location>
</feature>
<feature type="helix" evidence="34">
    <location>
        <begin position="1150"/>
        <end position="1152"/>
    </location>
</feature>
<feature type="strand" evidence="32">
    <location>
        <begin position="1155"/>
        <end position="1157"/>
    </location>
</feature>
<feature type="turn" evidence="34">
    <location>
        <begin position="1160"/>
        <end position="1162"/>
    </location>
</feature>
<reference key="1">
    <citation type="journal article" date="1999" name="Endocrinology">
        <title>A mouse gene encoding an oocyte antigen associated with autoimmune premature ovarian failure.</title>
        <authorList>
            <person name="Tong Z.-B."/>
            <person name="Nelson L.M."/>
        </authorList>
    </citation>
    <scope>NUCLEOTIDE SEQUENCE [MRNA] (ISOFORM 3)</scope>
    <scope>DEVELOPMENTAL STAGE</scope>
    <source>
        <strain>NIH Swiss</strain>
        <tissue>Ovary</tissue>
    </source>
</reference>
<reference key="2">
    <citation type="journal article" date="2000" name="Mamm. Genome">
        <title>Mater encodes a maternal protein in mice with a leucine-rich repeat domain homologous to porcine ribonuclease inhibitor.</title>
        <authorList>
            <person name="Tong Z.-B."/>
            <person name="Nelson L.M."/>
            <person name="Dean J."/>
        </authorList>
    </citation>
    <scope>NUCLEOTIDE SEQUENCE [GENOMIC DNA] (ISOFORM 3)</scope>
    <scope>VARIANTS ASP-59; LEU-94; LYS-139; PRO-308; GLN-1029 AND 1055-SER-SER-1056 DELINS ASN-ASN</scope>
    <source>
        <strain>129/Sv</strain>
    </source>
</reference>
<reference key="3">
    <citation type="journal article" date="2002" name="J. Immunol.">
        <title>Interacting quantitative trait loci control loss of peripheral tolerance and susceptibility to autoimmune ovarian dysgenesis after day 3 thymectomy in mice.</title>
        <authorList>
            <person name="Roper R.J."/>
            <person name="Ma R.Z."/>
            <person name="Biggins J.E."/>
            <person name="Butterfield R.J."/>
            <person name="Michael S.D."/>
            <person name="Tung K.S.K."/>
            <person name="Doerge R.W."/>
            <person name="Teuscher C."/>
        </authorList>
    </citation>
    <scope>NUCLEOTIDE SEQUENCE [MRNA] (ISOFORMS 1; 2; 3 AND 4)</scope>
    <source>
        <strain>A/J</strain>
        <strain>C57BL/6J</strain>
    </source>
</reference>
<reference key="4">
    <citation type="journal article" date="2004" name="Yi Chuan Xue Bao">
        <title>Identification and characterization of alternatively splicing variants for murine mater gene.</title>
        <authorList>
            <person name="Cheng H."/>
            <person name="Zhang X.J."/>
            <person name="Liu H.B."/>
            <person name="Zhang Y."/>
            <person name="Huang Z.F."/>
            <person name="Ma R.L."/>
        </authorList>
    </citation>
    <scope>NUCLEOTIDE SEQUENCE [MRNA] (ISOFORMS 3; 5; 6; 7 AND 8)</scope>
    <source>
        <strain>A/J</strain>
        <strain>C57BL/6J</strain>
        <strain>CBA/J</strain>
        <strain>SWR/J</strain>
    </source>
</reference>
<reference key="5">
    <citation type="journal article" date="2004" name="Genome Res.">
        <title>The status, quality, and expansion of the NIH full-length cDNA project: the Mammalian Gene Collection (MGC).</title>
        <authorList>
            <consortium name="The MGC Project Team"/>
        </authorList>
    </citation>
    <scope>NUCLEOTIDE SEQUENCE [LARGE SCALE MRNA] (ISOFORM 3)</scope>
    <source>
        <strain>C57BL/6J</strain>
        <tissue>Egg</tissue>
    </source>
</reference>
<reference key="6">
    <citation type="journal article" date="2005" name="Science">
        <title>The transcriptional landscape of the mammalian genome.</title>
        <authorList>
            <person name="Carninci P."/>
            <person name="Kasukawa T."/>
            <person name="Katayama S."/>
            <person name="Gough J."/>
            <person name="Frith M.C."/>
            <person name="Maeda N."/>
            <person name="Oyama R."/>
            <person name="Ravasi T."/>
            <person name="Lenhard B."/>
            <person name="Wells C."/>
            <person name="Kodzius R."/>
            <person name="Shimokawa K."/>
            <person name="Bajic V.B."/>
            <person name="Brenner S.E."/>
            <person name="Batalov S."/>
            <person name="Forrest A.R."/>
            <person name="Zavolan M."/>
            <person name="Davis M.J."/>
            <person name="Wilming L.G."/>
            <person name="Aidinis V."/>
            <person name="Allen J.E."/>
            <person name="Ambesi-Impiombato A."/>
            <person name="Apweiler R."/>
            <person name="Aturaliya R.N."/>
            <person name="Bailey T.L."/>
            <person name="Bansal M."/>
            <person name="Baxter L."/>
            <person name="Beisel K.W."/>
            <person name="Bersano T."/>
            <person name="Bono H."/>
            <person name="Chalk A.M."/>
            <person name="Chiu K.P."/>
            <person name="Choudhary V."/>
            <person name="Christoffels A."/>
            <person name="Clutterbuck D.R."/>
            <person name="Crowe M.L."/>
            <person name="Dalla E."/>
            <person name="Dalrymple B.P."/>
            <person name="de Bono B."/>
            <person name="Della Gatta G."/>
            <person name="di Bernardo D."/>
            <person name="Down T."/>
            <person name="Engstrom P."/>
            <person name="Fagiolini M."/>
            <person name="Faulkner G."/>
            <person name="Fletcher C.F."/>
            <person name="Fukushima T."/>
            <person name="Furuno M."/>
            <person name="Futaki S."/>
            <person name="Gariboldi M."/>
            <person name="Georgii-Hemming P."/>
            <person name="Gingeras T.R."/>
            <person name="Gojobori T."/>
            <person name="Green R.E."/>
            <person name="Gustincich S."/>
            <person name="Harbers M."/>
            <person name="Hayashi Y."/>
            <person name="Hensch T.K."/>
            <person name="Hirokawa N."/>
            <person name="Hill D."/>
            <person name="Huminiecki L."/>
            <person name="Iacono M."/>
            <person name="Ikeo K."/>
            <person name="Iwama A."/>
            <person name="Ishikawa T."/>
            <person name="Jakt M."/>
            <person name="Kanapin A."/>
            <person name="Katoh M."/>
            <person name="Kawasawa Y."/>
            <person name="Kelso J."/>
            <person name="Kitamura H."/>
            <person name="Kitano H."/>
            <person name="Kollias G."/>
            <person name="Krishnan S.P."/>
            <person name="Kruger A."/>
            <person name="Kummerfeld S.K."/>
            <person name="Kurochkin I.V."/>
            <person name="Lareau L.F."/>
            <person name="Lazarevic D."/>
            <person name="Lipovich L."/>
            <person name="Liu J."/>
            <person name="Liuni S."/>
            <person name="McWilliam S."/>
            <person name="Madan Babu M."/>
            <person name="Madera M."/>
            <person name="Marchionni L."/>
            <person name="Matsuda H."/>
            <person name="Matsuzawa S."/>
            <person name="Miki H."/>
            <person name="Mignone F."/>
            <person name="Miyake S."/>
            <person name="Morris K."/>
            <person name="Mottagui-Tabar S."/>
            <person name="Mulder N."/>
            <person name="Nakano N."/>
            <person name="Nakauchi H."/>
            <person name="Ng P."/>
            <person name="Nilsson R."/>
            <person name="Nishiguchi S."/>
            <person name="Nishikawa S."/>
            <person name="Nori F."/>
            <person name="Ohara O."/>
            <person name="Okazaki Y."/>
            <person name="Orlando V."/>
            <person name="Pang K.C."/>
            <person name="Pavan W.J."/>
            <person name="Pavesi G."/>
            <person name="Pesole G."/>
            <person name="Petrovsky N."/>
            <person name="Piazza S."/>
            <person name="Reed J."/>
            <person name="Reid J.F."/>
            <person name="Ring B.Z."/>
            <person name="Ringwald M."/>
            <person name="Rost B."/>
            <person name="Ruan Y."/>
            <person name="Salzberg S.L."/>
            <person name="Sandelin A."/>
            <person name="Schneider C."/>
            <person name="Schoenbach C."/>
            <person name="Sekiguchi K."/>
            <person name="Semple C.A."/>
            <person name="Seno S."/>
            <person name="Sessa L."/>
            <person name="Sheng Y."/>
            <person name="Shibata Y."/>
            <person name="Shimada H."/>
            <person name="Shimada K."/>
            <person name="Silva D."/>
            <person name="Sinclair B."/>
            <person name="Sperling S."/>
            <person name="Stupka E."/>
            <person name="Sugiura K."/>
            <person name="Sultana R."/>
            <person name="Takenaka Y."/>
            <person name="Taki K."/>
            <person name="Tammoja K."/>
            <person name="Tan S.L."/>
            <person name="Tang S."/>
            <person name="Taylor M.S."/>
            <person name="Tegner J."/>
            <person name="Teichmann S.A."/>
            <person name="Ueda H.R."/>
            <person name="van Nimwegen E."/>
            <person name="Verardo R."/>
            <person name="Wei C.L."/>
            <person name="Yagi K."/>
            <person name="Yamanishi H."/>
            <person name="Zabarovsky E."/>
            <person name="Zhu S."/>
            <person name="Zimmer A."/>
            <person name="Hide W."/>
            <person name="Bult C."/>
            <person name="Grimmond S.M."/>
            <person name="Teasdale R.D."/>
            <person name="Liu E.T."/>
            <person name="Brusic V."/>
            <person name="Quackenbush J."/>
            <person name="Wahlestedt C."/>
            <person name="Mattick J.S."/>
            <person name="Hume D.A."/>
            <person name="Kai C."/>
            <person name="Sasaki D."/>
            <person name="Tomaru Y."/>
            <person name="Fukuda S."/>
            <person name="Kanamori-Katayama M."/>
            <person name="Suzuki M."/>
            <person name="Aoki J."/>
            <person name="Arakawa T."/>
            <person name="Iida J."/>
            <person name="Imamura K."/>
            <person name="Itoh M."/>
            <person name="Kato T."/>
            <person name="Kawaji H."/>
            <person name="Kawagashira N."/>
            <person name="Kawashima T."/>
            <person name="Kojima M."/>
            <person name="Kondo S."/>
            <person name="Konno H."/>
            <person name="Nakano K."/>
            <person name="Ninomiya N."/>
            <person name="Nishio T."/>
            <person name="Okada M."/>
            <person name="Plessy C."/>
            <person name="Shibata K."/>
            <person name="Shiraki T."/>
            <person name="Suzuki S."/>
            <person name="Tagami M."/>
            <person name="Waki K."/>
            <person name="Watahiki A."/>
            <person name="Okamura-Oho Y."/>
            <person name="Suzuki H."/>
            <person name="Kawai J."/>
            <person name="Hayashizaki Y."/>
        </authorList>
    </citation>
    <scope>NUCLEOTIDE SEQUENCE [LARGE SCALE MRNA] OF 397-722</scope>
    <source>
        <strain>C57BL/6J</strain>
        <tissue>Egg</tissue>
    </source>
</reference>
<reference key="7">
    <citation type="journal article" date="2000" name="Nat. Genet.">
        <title>Mater, a maternal effect gene required for early embryonic development in mice.</title>
        <authorList>
            <person name="Tong Z.-B."/>
            <person name="Gold L."/>
            <person name="Pfeifer K.E."/>
            <person name="Dorward H."/>
            <person name="Lee E."/>
            <person name="Bondy C.A."/>
            <person name="Dean J."/>
            <person name="Nelson L.M."/>
        </authorList>
    </citation>
    <scope>FUNCTION</scope>
</reference>
<reference key="8">
    <citation type="journal article" date="2004" name="Endocrinology">
        <title>Developmental expression and subcellular localization of mouse MATER, an oocyte-specific protein essential for early development.</title>
        <authorList>
            <person name="Tong Z.-B."/>
            <person name="Gold L."/>
            <person name="De Pol A."/>
            <person name="Vanevski K."/>
            <person name="Dorward H."/>
            <person name="Sena P."/>
            <person name="Palumbo C."/>
            <person name="Bondy C.A."/>
            <person name="Nelson L.M."/>
        </authorList>
    </citation>
    <scope>SUBCELLULAR LOCATION</scope>
    <scope>DEVELOPMENTAL STAGE</scope>
    <scope>DISRUPTION PHENOTYPE</scope>
</reference>
<reference key="9">
    <citation type="journal article" date="2008" name="Development">
        <title>Maternally derived FILIA-MATER complex localizes asymmetrically in cleavage-stage mouse embryos.</title>
        <authorList>
            <person name="Ohsugi M."/>
            <person name="Zheng P."/>
            <person name="Baibakov B."/>
            <person name="Li L."/>
            <person name="Dean J."/>
        </authorList>
    </citation>
    <scope>SUBCELLULAR LOCATION</scope>
    <scope>IDENTIFICATION IN THE SCMC COMPLEX WITH KHDC3</scope>
</reference>
<reference key="10">
    <citation type="journal article" date="2008" name="Dev. Cell">
        <title>A subcortical maternal complex essential for preimplantation mouse embryogenesis.</title>
        <authorList>
            <person name="Li L."/>
            <person name="Baibakov B."/>
            <person name="Dean J."/>
        </authorList>
    </citation>
    <scope>FUNCTION</scope>
    <scope>IDENTIFICATION IN THE SCMC COMPLEX WITH KHDC3; OOEP AND TLE6</scope>
    <scope>DEVELOPMENTAL STAGE</scope>
</reference>
<reference key="11">
    <citation type="journal article" date="2012" name="Biol. Reprod.">
        <title>NLRP5 mediates mitochondrial function in mouse oocytes and embryos.</title>
        <authorList>
            <person name="Fernandes R."/>
            <person name="Tsuda C."/>
            <person name="Perumalsamy A.L."/>
            <person name="Naranian T."/>
            <person name="Chong J."/>
            <person name="Acton B.M."/>
            <person name="Tong Z.B."/>
            <person name="Nelson L.M."/>
            <person name="Jurisicova A."/>
        </authorList>
    </citation>
    <scope>FUNCTION</scope>
    <scope>DISRUPTION PHENOTYPE</scope>
</reference>
<reference key="12">
    <citation type="journal article" date="2014" name="Dev. Biol.">
        <title>The role of MATER in endoplasmic reticulum distribution and calcium homeostasis in mouse oocytes.</title>
        <authorList>
            <person name="Kim B."/>
            <person name="Zhang X."/>
            <person name="Kan R."/>
            <person name="Cohen R."/>
            <person name="Mukai C."/>
            <person name="Travis A.J."/>
            <person name="Coonrod S.A."/>
        </authorList>
    </citation>
    <scope>FUNCTION</scope>
    <scope>INTERACTION WITH TUBB3</scope>
    <scope>DISRUPTION PHENOTYPE</scope>
</reference>
<reference key="13">
    <citation type="journal article" date="2014" name="Nat. Commun.">
        <title>The subcortical maternal complex controls symmetric division of mouse zygotes by regulating F-actin dynamics.</title>
        <authorList>
            <person name="Yu X.J."/>
            <person name="Yi Z."/>
            <person name="Gao Z."/>
            <person name="Qin D."/>
            <person name="Zhai Y."/>
            <person name="Chen X."/>
            <person name="Ou-Yang Y."/>
            <person name="Wang Z.B."/>
            <person name="Zheng P."/>
            <person name="Zhu M.S."/>
            <person name="Wang H."/>
            <person name="Sun Q.Y."/>
            <person name="Dean J."/>
            <person name="Li L."/>
        </authorList>
    </citation>
    <scope>FUNCTION</scope>
    <scope>INTERACTION WITH CFL1</scope>
    <scope>SUBCELLULAR LOCATION</scope>
    <scope>DISRUPTION PHENOTYPE</scope>
</reference>
<reference key="14">
    <citation type="journal article" date="2018" name="J. Mol. Cell Biol.">
        <title>Zbed3 participates in the subcortical maternal complex and regulates the distribution of organelles.</title>
        <authorList>
            <person name="Gao Z."/>
            <person name="Zhang X."/>
            <person name="Yu X."/>
            <person name="Qin D."/>
            <person name="Xiao Y."/>
            <person name="Yu Y."/>
            <person name="Xiang Y."/>
            <person name="Nie X."/>
            <person name="Lu X."/>
            <person name="Liu W."/>
            <person name="Yi Z."/>
            <person name="Li L."/>
        </authorList>
    </citation>
    <scope>IDENTIFICATION IN THE SCMC COMPLE WITH OOEP; TL6 AND KHDC3</scope>
    <scope>INTERACTION WITH ZBED3</scope>
    <scope>SUBCELLULAR LOCATION</scope>
    <scope>DEVELOPMENTAL STAGE</scope>
    <scope>DISRUPTION PHENOTYPE</scope>
</reference>
<reference key="15">
    <citation type="journal article" date="2019" name="Development">
        <title>The subcortical maternal complex protein Nlrp4f is involved in cytoplasmic lattice formation and organelle distribution.</title>
        <authorList>
            <person name="Qin D."/>
            <person name="Gao Z."/>
            <person name="Xiao Y."/>
            <person name="Zhang X."/>
            <person name="Ma H."/>
            <person name="Yu X."/>
            <person name="Nie X."/>
            <person name="Fan N."/>
            <person name="Wang X."/>
            <person name="Ouyang Y."/>
            <person name="Sun Q.Y."/>
            <person name="Yi Z."/>
            <person name="Li L."/>
        </authorList>
    </citation>
    <scope>INTERACTION WITH TLE6</scope>
    <scope>SUBCELLULAR LOCATION</scope>
    <scope>DEVELOPMENTAL STAGE</scope>
</reference>
<reference key="16">
    <citation type="journal article" date="2019" name="Nat. Commun.">
        <title>Anchoring cortical granules in the cortex ensures trafficking to the plasma membrane for post-fertilization exocytosis.</title>
        <authorList>
            <person name="Vogt E.J."/>
            <person name="Tokuhiro K."/>
            <person name="Guo M."/>
            <person name="Dale R."/>
            <person name="Yang G."/>
            <person name="Shin S.W."/>
            <person name="Movilla M.J."/>
            <person name="Shroff H."/>
            <person name="Dean J."/>
        </authorList>
    </citation>
    <scope>FUNCTION</scope>
    <scope>TISSUE SPECIFICITY</scope>
    <scope>DISRUPTION PHENOTYPE</scope>
</reference>
<reference key="17">
    <citation type="journal article" date="2020" name="Microorganisms">
        <title>Transcriptome Analysis of Testes and Uterus: Reproductive Dysfunction Induced by Toxoplasma gondii in Mice.</title>
        <authorList>
            <person name="Wang J."/>
            <person name="Liu T."/>
            <person name="Mahmmod Y.S."/>
            <person name="Yang Z."/>
            <person name="Tan J."/>
            <person name="Ren Z."/>
            <person name="Zhang X."/>
            <person name="Yang X."/>
            <person name="Zhang X.X."/>
            <person name="Yuan Z.G."/>
        </authorList>
    </citation>
    <scope>INDUCTION (MICROBIAL INFECTION)</scope>
</reference>
<reference key="18">
    <citation type="journal article" date="2023" name="Cell">
        <title>Mammalian oocytes store proteins for the early embryo on cytoplasmic lattices.</title>
        <authorList>
            <person name="Jentoft I.M.A."/>
            <person name="Baeuerlein F.J.B."/>
            <person name="Welp L.M."/>
            <person name="Cooper B.H."/>
            <person name="Petrovic A."/>
            <person name="So C."/>
            <person name="Penir S.M."/>
            <person name="Politi A.Z."/>
            <person name="Horokhovskyi Y."/>
            <person name="Takala I."/>
            <person name="Eckel H."/>
            <person name="Moltrecht R."/>
            <person name="Lenart P."/>
            <person name="Cavazza T."/>
            <person name="Liepe J."/>
            <person name="Brose N."/>
            <person name="Urlaub H."/>
            <person name="Fernandez-Busnadiego R."/>
            <person name="Schuh M."/>
        </authorList>
    </citation>
    <scope>FUNCTION</scope>
    <scope>IDENTIFICATION IN THE SCMC COMPLEX</scope>
    <scope>SUBCELLULAR LOCATION</scope>
</reference>
<reference evidence="27 28 29 30" key="19">
    <citation type="journal article" date="2024" name="Nat. Struct. Mol. Biol.">
        <title>Structural basis of the subcortical maternal complex and its implications in reproductive disorders.</title>
        <authorList>
            <person name="Chi P."/>
            <person name="Ou G."/>
            <person name="Qin D."/>
            <person name="Han Z."/>
            <person name="Li J."/>
            <person name="Xiao Q."/>
            <person name="Gao Z."/>
            <person name="Xu C."/>
            <person name="Qi Q."/>
            <person name="Liu Q."/>
            <person name="Liu S."/>
            <person name="Li J."/>
            <person name="Guo L."/>
            <person name="Lu Y."/>
            <person name="Chen J."/>
            <person name="Wang X."/>
            <person name="Shi H."/>
            <person name="Li L."/>
            <person name="Deng D."/>
        </authorList>
    </citation>
    <scope>STRUCTURE BY ELECTRON MICROSCOPY (2.78 ANGSTROMS) OF 105-1163 IN COMPLEX WITH OOEP AND TLE6</scope>
    <scope>IDENTIFICATION IN THE SCMC COMPLEX</scope>
    <scope>MUTAGENESIS OF HIS-425; ARG-597; LEU-602; SER-656; LEU-729; CYS-737; LEU-910; THR-1070; LEU-1077 AND LEU-1079</scope>
</reference>
<gene>
    <name evidence="24 26" type="primary">Nlrp5</name>
    <name evidence="20" type="synonym">Mater</name>
    <name type="synonym">Nalp5</name>
</gene>
<protein>
    <recommendedName>
        <fullName evidence="25">NACHT, LRR and PYD domains-containing protein 5</fullName>
    </recommendedName>
    <alternativeName>
        <fullName evidence="20">Maternal antigen that embryos require</fullName>
        <shortName evidence="20">Mater protein</shortName>
    </alternativeName>
    <alternativeName>
        <fullName evidence="19">Ooplasm-specific protein 1</fullName>
        <shortName evidence="19">OP1</shortName>
    </alternativeName>
</protein>
<sequence length="1163" mass="131318">MGPPEKESKAILKARGLEEEQKSERKMTSPENDSKSIQKDQGPEQEQTSESTMGPPEKESKAILKARGLEEEQKSERKMTSPENDSKSIQKDQGPEQEQTSESTMGPPEKDSKAILKARGLEEEQKSESTMSPSENVSRAILKDSGSEEVEQASERKMTSPENDSKSIQKDQGPEQEQTSETLQSKEEDEVTEADKDNGGDLQDYKAHVIAKFDTSVDLHYDSPEMKLLSDAFKPYQKTFQPHTIILHGRPGVGKSALARSIVLGWAQGKLFQKMSFVIFFSVREIKWTEKSSLAQLIAKECPDSWDLVTKIMSQPERLLFVIDGLDDMDSVLQHDDMTLSRDWKDEQPIYILMYSLLRKALLPQSFLIITTRNTGLEKLKSMVVSPLYILVEGLSASRRSQLVLENISNESDRIQVFHSLIENHQLFDQCQAPSVCSLVCEALQLQKKLGKRCTLPCQTLTGLYATLVFHQLTLKRPSQSALSQEEQITLVGLCMMAAEGVWTMRSVFYDDDLKNYSLKESEILALFHMNILLQVGHNSEQCYVFSHLSLQDFFAALYYVLEGLEEWNQHFCFIENQRSIMEVKRTDDTRLLGMKRFLFGLMNKDILKTLEVLFEYPVIPTVEQKLQHWVSLIAQQVNGTSPMDTLDAFYCLFESQDEEFVGGALKRFQEVWLLINQKMDLKVSSYCLKHCQNLKAIRVDIRDLLSVDNTLELCPVVTVQETQCKPLLMEWWGNFCSVLGSLRNLKELDLGDSILSQRAMKILCLELRNQSCRIQKLTFKSAEVVSGLKHLWKLLFSNQNLKYLNLGNTPMKDDDMKLACEALKHPKCSVETLRLDSCELTIIGYEMISTLLISTTRLKCLSLAKNRVGVKSMISLGNALSSSMCLLQKLILDNCGLTPASCHLLVSALFSNQNLTHLCLSNNSLGTEGVQQLCQFLRNPECALQRLILNHCNIVDDAYGFLAMRLANNTKLTHLSLTMNPVGDGAMKLLCEALKEPTCYLQELELVDCQLTQNCCEDLACMITTTKHLKSLDLGNNALGDKGVITLCEGLKQSSSSLRRLGLGACKLTSNCCEALSLAISCNPHLNSLNLVKNDFSTSGMLKLCSAFQCPVSNLGIIGLWKQEYYARVRRQLEEVEFVKPHVVIDGDWYASDEDDRNWWKN</sequence>
<keyword id="KW-0002">3D-structure</keyword>
<keyword id="KW-0025">Alternative splicing</keyword>
<keyword id="KW-0067">ATP-binding</keyword>
<keyword id="KW-0963">Cytoplasm</keyword>
<keyword id="KW-0968">Cytoplasmic vesicle</keyword>
<keyword id="KW-0333">Golgi apparatus</keyword>
<keyword id="KW-0433">Leucine-rich repeat</keyword>
<keyword id="KW-0496">Mitochondrion</keyword>
<keyword id="KW-0547">Nucleotide-binding</keyword>
<keyword id="KW-0539">Nucleus</keyword>
<keyword id="KW-1185">Reference proteome</keyword>
<keyword id="KW-0677">Repeat</keyword>
<accession>Q9R1M5</accession>
<accession>Q3UXD0</accession>
<accession>Q53ZD5</accession>
<accession>Q6VSF9</accession>
<accession>Q6VSG0</accession>
<accession>Q6VSG1</accession>
<accession>Q6VSG2</accession>
<accession>Q6VSG3</accession>
<accession>Q6VSG4</accession>
<accession>Q6VSG5</accession>
<accession>Q6XZF2</accession>
<accession>Q7TPU9</accession>
<accession>Q9JLR2</accession>
<name>NALP5_MOUSE</name>
<dbReference type="EMBL" id="AF074018">
    <property type="protein sequence ID" value="AAD51762.1"/>
    <property type="molecule type" value="mRNA"/>
</dbReference>
<dbReference type="EMBL" id="AF143573">
    <property type="protein sequence ID" value="AAF64393.1"/>
    <property type="molecule type" value="Genomic_DNA"/>
</dbReference>
<dbReference type="EMBL" id="AF143559">
    <property type="protein sequence ID" value="AAF64393.1"/>
    <property type="status" value="JOINED"/>
    <property type="molecule type" value="Genomic_DNA"/>
</dbReference>
<dbReference type="EMBL" id="AF143560">
    <property type="protein sequence ID" value="AAF64393.1"/>
    <property type="status" value="JOINED"/>
    <property type="molecule type" value="Genomic_DNA"/>
</dbReference>
<dbReference type="EMBL" id="AF143561">
    <property type="protein sequence ID" value="AAF64393.1"/>
    <property type="status" value="JOINED"/>
    <property type="molecule type" value="Genomic_DNA"/>
</dbReference>
<dbReference type="EMBL" id="AF143562">
    <property type="protein sequence ID" value="AAF64393.1"/>
    <property type="status" value="JOINED"/>
    <property type="molecule type" value="Genomic_DNA"/>
</dbReference>
<dbReference type="EMBL" id="AF143563">
    <property type="protein sequence ID" value="AAF64393.1"/>
    <property type="status" value="JOINED"/>
    <property type="molecule type" value="Genomic_DNA"/>
</dbReference>
<dbReference type="EMBL" id="AF143564">
    <property type="protein sequence ID" value="AAF64393.1"/>
    <property type="status" value="JOINED"/>
    <property type="molecule type" value="Genomic_DNA"/>
</dbReference>
<dbReference type="EMBL" id="AF143565">
    <property type="protein sequence ID" value="AAF64393.1"/>
    <property type="status" value="JOINED"/>
    <property type="molecule type" value="Genomic_DNA"/>
</dbReference>
<dbReference type="EMBL" id="AF143566">
    <property type="protein sequence ID" value="AAF64393.1"/>
    <property type="status" value="JOINED"/>
    <property type="molecule type" value="Genomic_DNA"/>
</dbReference>
<dbReference type="EMBL" id="AF143567">
    <property type="protein sequence ID" value="AAF64393.1"/>
    <property type="status" value="JOINED"/>
    <property type="molecule type" value="Genomic_DNA"/>
</dbReference>
<dbReference type="EMBL" id="AF143568">
    <property type="protein sequence ID" value="AAF64393.1"/>
    <property type="status" value="JOINED"/>
    <property type="molecule type" value="Genomic_DNA"/>
</dbReference>
<dbReference type="EMBL" id="AF143569">
    <property type="protein sequence ID" value="AAF64393.1"/>
    <property type="status" value="JOINED"/>
    <property type="molecule type" value="Genomic_DNA"/>
</dbReference>
<dbReference type="EMBL" id="AF143570">
    <property type="protein sequence ID" value="AAF64393.1"/>
    <property type="status" value="JOINED"/>
    <property type="molecule type" value="Genomic_DNA"/>
</dbReference>
<dbReference type="EMBL" id="AF143571">
    <property type="protein sequence ID" value="AAF64393.1"/>
    <property type="status" value="JOINED"/>
    <property type="molecule type" value="Genomic_DNA"/>
</dbReference>
<dbReference type="EMBL" id="AF143572">
    <property type="protein sequence ID" value="AAF64393.1"/>
    <property type="status" value="JOINED"/>
    <property type="molecule type" value="Genomic_DNA"/>
</dbReference>
<dbReference type="EMBL" id="AY196361">
    <property type="protein sequence ID" value="AAO52697.1"/>
    <property type="molecule type" value="mRNA"/>
</dbReference>
<dbReference type="EMBL" id="AY196362">
    <property type="protein sequence ID" value="AAO52698.1"/>
    <property type="molecule type" value="mRNA"/>
</dbReference>
<dbReference type="EMBL" id="AY329484">
    <property type="protein sequence ID" value="AAQ94607.1"/>
    <property type="molecule type" value="mRNA"/>
</dbReference>
<dbReference type="EMBL" id="AY329485">
    <property type="protein sequence ID" value="AAQ94608.1"/>
    <property type="molecule type" value="mRNA"/>
</dbReference>
<dbReference type="EMBL" id="AY329486">
    <property type="protein sequence ID" value="AAQ94609.1"/>
    <property type="molecule type" value="mRNA"/>
</dbReference>
<dbReference type="EMBL" id="AY329487">
    <property type="protein sequence ID" value="AAQ94610.1"/>
    <property type="molecule type" value="mRNA"/>
</dbReference>
<dbReference type="EMBL" id="AY329488">
    <property type="protein sequence ID" value="AAQ94611.1"/>
    <property type="molecule type" value="mRNA"/>
</dbReference>
<dbReference type="EMBL" id="AY329489">
    <property type="protein sequence ID" value="AAQ94612.1"/>
    <property type="molecule type" value="mRNA"/>
</dbReference>
<dbReference type="EMBL" id="AY329490">
    <property type="protein sequence ID" value="AAQ94613.1"/>
    <property type="molecule type" value="mRNA"/>
</dbReference>
<dbReference type="EMBL" id="AY329491">
    <property type="protein sequence ID" value="AAQ94614.1"/>
    <property type="molecule type" value="mRNA"/>
</dbReference>
<dbReference type="EMBL" id="BC053384">
    <property type="protein sequence ID" value="AAH53384.1"/>
    <property type="molecule type" value="mRNA"/>
</dbReference>
<dbReference type="EMBL" id="AK135731">
    <property type="protein sequence ID" value="BAE22633.1"/>
    <property type="molecule type" value="mRNA"/>
</dbReference>
<dbReference type="CCDS" id="CCDS20929.1">
    <molecule id="Q9R1M5-5"/>
</dbReference>
<dbReference type="CCDS" id="CCDS20930.1">
    <molecule id="Q9R1M5-3"/>
</dbReference>
<dbReference type="CCDS" id="CCDS85233.1">
    <molecule id="Q9R1M5-6"/>
</dbReference>
<dbReference type="PIR" id="A59000">
    <property type="entry name" value="A59000"/>
</dbReference>
<dbReference type="RefSeq" id="NP_001034232.1">
    <molecule id="Q9R1M5-5"/>
    <property type="nucleotide sequence ID" value="NM_001039143.2"/>
</dbReference>
<dbReference type="RefSeq" id="NP_001292786.1">
    <molecule id="Q9R1M5-6"/>
    <property type="nucleotide sequence ID" value="NM_001305857.1"/>
</dbReference>
<dbReference type="RefSeq" id="NP_035990.1">
    <molecule id="Q9R1M5-3"/>
    <property type="nucleotide sequence ID" value="NM_011860.3"/>
</dbReference>
<dbReference type="PDB" id="8H93">
    <property type="method" value="EM"/>
    <property type="resolution" value="3.01 A"/>
    <property type="chains" value="A/D=105-1163"/>
</dbReference>
<dbReference type="PDB" id="8H94">
    <property type="method" value="EM"/>
    <property type="resolution" value="2.90 A"/>
    <property type="chains" value="A=105-1163"/>
</dbReference>
<dbReference type="PDB" id="8H95">
    <property type="method" value="EM"/>
    <property type="resolution" value="3.38 A"/>
    <property type="chains" value="A=105-1163"/>
</dbReference>
<dbReference type="PDB" id="8H96">
    <property type="method" value="EM"/>
    <property type="resolution" value="2.78 A"/>
    <property type="chains" value="A=105-1163"/>
</dbReference>
<dbReference type="PDB" id="8XI3">
    <property type="method" value="EM"/>
    <property type="resolution" value="3.00 A"/>
    <property type="chains" value="A=105-1163"/>
</dbReference>
<dbReference type="PDBsum" id="8H93"/>
<dbReference type="PDBsum" id="8H94"/>
<dbReference type="PDBsum" id="8H95"/>
<dbReference type="PDBsum" id="8H96"/>
<dbReference type="PDBsum" id="8XI3"/>
<dbReference type="EMDB" id="EMD-34552"/>
<dbReference type="EMDB" id="EMD-34554"/>
<dbReference type="EMDB" id="EMD-34555"/>
<dbReference type="EMDB" id="EMD-34556"/>
<dbReference type="EMDB" id="EMD-38369"/>
<dbReference type="SMR" id="Q9R1M5"/>
<dbReference type="BioGRID" id="204829">
    <property type="interactions" value="3"/>
</dbReference>
<dbReference type="CORUM" id="Q9R1M5"/>
<dbReference type="FunCoup" id="Q9R1M5">
    <property type="interactions" value="75"/>
</dbReference>
<dbReference type="IntAct" id="Q9R1M5">
    <property type="interactions" value="3"/>
</dbReference>
<dbReference type="STRING" id="10090.ENSMUSP00000015866"/>
<dbReference type="iPTMnet" id="Q9R1M5"/>
<dbReference type="PhosphoSitePlus" id="Q9R1M5"/>
<dbReference type="PaxDb" id="10090-ENSMUSP00000015866"/>
<dbReference type="ProteomicsDB" id="293621">
    <molecule id="Q9R1M5-1"/>
</dbReference>
<dbReference type="ProteomicsDB" id="293622">
    <molecule id="Q9R1M5-2"/>
</dbReference>
<dbReference type="ProteomicsDB" id="293623">
    <molecule id="Q9R1M5-3"/>
</dbReference>
<dbReference type="ProteomicsDB" id="293624">
    <molecule id="Q9R1M5-4"/>
</dbReference>
<dbReference type="ProteomicsDB" id="293625">
    <molecule id="Q9R1M5-5"/>
</dbReference>
<dbReference type="ProteomicsDB" id="293626">
    <molecule id="Q9R1M5-6"/>
</dbReference>
<dbReference type="ProteomicsDB" id="293627">
    <molecule id="Q9R1M5-7"/>
</dbReference>
<dbReference type="ProteomicsDB" id="293628">
    <molecule id="Q9R1M5-8"/>
</dbReference>
<dbReference type="Antibodypedia" id="46495">
    <property type="antibodies" value="79 antibodies from 26 providers"/>
</dbReference>
<dbReference type="DNASU" id="23968"/>
<dbReference type="Ensembl" id="ENSMUST00000015866.14">
    <molecule id="Q9R1M5-3"/>
    <property type="protein sequence ID" value="ENSMUSP00000015866.8"/>
    <property type="gene ID" value="ENSMUSG00000015721.19"/>
</dbReference>
<dbReference type="Ensembl" id="ENSMUST00000086341.12">
    <molecule id="Q9R1M5-5"/>
    <property type="protein sequence ID" value="ENSMUSP00000083524.6"/>
    <property type="gene ID" value="ENSMUSG00000015721.19"/>
</dbReference>
<dbReference type="Ensembl" id="ENSMUST00000108441.8">
    <molecule id="Q9R1M5-6"/>
    <property type="protein sequence ID" value="ENSMUSP00000104080.2"/>
    <property type="gene ID" value="ENSMUSG00000015721.19"/>
</dbReference>
<dbReference type="Ensembl" id="ENSMUST00000133237.2">
    <molecule id="Q9R1M5-7"/>
    <property type="protein sequence ID" value="ENSMUSP00000122007.2"/>
    <property type="gene ID" value="ENSMUSG00000015721.19"/>
</dbReference>
<dbReference type="Ensembl" id="ENSMUST00000139661.8">
    <molecule id="Q9R1M5-8"/>
    <property type="protein sequence ID" value="ENSMUSP00000118638.2"/>
    <property type="gene ID" value="ENSMUSG00000015721.19"/>
</dbReference>
<dbReference type="GeneID" id="23968"/>
<dbReference type="KEGG" id="mmu:23968"/>
<dbReference type="UCSC" id="uc009foe.2">
    <molecule id="Q9R1M5-1"/>
    <property type="organism name" value="mouse"/>
</dbReference>
<dbReference type="UCSC" id="uc009fof.2">
    <molecule id="Q9R1M5-5"/>
    <property type="organism name" value="mouse"/>
</dbReference>
<dbReference type="UCSC" id="uc012fev.2">
    <molecule id="Q9R1M5-6"/>
    <property type="organism name" value="mouse"/>
</dbReference>
<dbReference type="AGR" id="MGI:1345193"/>
<dbReference type="CTD" id="126206"/>
<dbReference type="MGI" id="MGI:1345193">
    <property type="gene designation" value="Nlrp5"/>
</dbReference>
<dbReference type="VEuPathDB" id="HostDB:ENSMUSG00000015721"/>
<dbReference type="eggNOG" id="ENOG502SBIG">
    <property type="taxonomic scope" value="Eukaryota"/>
</dbReference>
<dbReference type="GeneTree" id="ENSGT00940000162898"/>
<dbReference type="HOGENOM" id="CLU_002274_2_1_1"/>
<dbReference type="InParanoid" id="Q9R1M5"/>
<dbReference type="OMA" id="WKISIHI"/>
<dbReference type="OrthoDB" id="52624at9989"/>
<dbReference type="PhylomeDB" id="Q9R1M5"/>
<dbReference type="BioGRID-ORCS" id="23968">
    <property type="hits" value="0 hits in 61 CRISPR screens"/>
</dbReference>
<dbReference type="ChiTaRS" id="Nlrp5">
    <property type="organism name" value="mouse"/>
</dbReference>
<dbReference type="PRO" id="PR:Q9R1M5"/>
<dbReference type="Proteomes" id="UP000000589">
    <property type="component" value="Chromosome 7"/>
</dbReference>
<dbReference type="RNAct" id="Q9R1M5">
    <property type="molecule type" value="protein"/>
</dbReference>
<dbReference type="Bgee" id="ENSMUSG00000015721">
    <property type="expression patterns" value="Expressed in primary oocyte and 12 other cell types or tissues"/>
</dbReference>
<dbReference type="GO" id="GO:0045179">
    <property type="term" value="C:apical cortex"/>
    <property type="evidence" value="ECO:0000314"/>
    <property type="project" value="MGI"/>
</dbReference>
<dbReference type="GO" id="GO:0005938">
    <property type="term" value="C:cell cortex"/>
    <property type="evidence" value="ECO:0000314"/>
    <property type="project" value="UniProtKB"/>
</dbReference>
<dbReference type="GO" id="GO:0060473">
    <property type="term" value="C:cortical granule"/>
    <property type="evidence" value="ECO:0000250"/>
    <property type="project" value="UniProtKB"/>
</dbReference>
<dbReference type="GO" id="GO:0005737">
    <property type="term" value="C:cytoplasm"/>
    <property type="evidence" value="ECO:0000314"/>
    <property type="project" value="UniProtKB"/>
</dbReference>
<dbReference type="GO" id="GO:0140095">
    <property type="term" value="C:cytoplasmic lattice"/>
    <property type="evidence" value="ECO:0000314"/>
    <property type="project" value="UniProtKB"/>
</dbReference>
<dbReference type="GO" id="GO:0005829">
    <property type="term" value="C:cytosol"/>
    <property type="evidence" value="ECO:0000314"/>
    <property type="project" value="MGI"/>
</dbReference>
<dbReference type="GO" id="GO:0005794">
    <property type="term" value="C:Golgi apparatus"/>
    <property type="evidence" value="ECO:0000250"/>
    <property type="project" value="UniProtKB"/>
</dbReference>
<dbReference type="GO" id="GO:0005739">
    <property type="term" value="C:mitochondrion"/>
    <property type="evidence" value="ECO:0000314"/>
    <property type="project" value="UniProtKB"/>
</dbReference>
<dbReference type="GO" id="GO:0005730">
    <property type="term" value="C:nucleolus"/>
    <property type="evidence" value="ECO:0000314"/>
    <property type="project" value="UniProtKB"/>
</dbReference>
<dbReference type="GO" id="GO:1990917">
    <property type="term" value="C:ooplasm"/>
    <property type="evidence" value="ECO:0000314"/>
    <property type="project" value="MGI"/>
</dbReference>
<dbReference type="GO" id="GO:0032991">
    <property type="term" value="C:protein-containing complex"/>
    <property type="evidence" value="ECO:0000314"/>
    <property type="project" value="MGI"/>
</dbReference>
<dbReference type="GO" id="GO:0106333">
    <property type="term" value="C:subcortical maternal complex"/>
    <property type="evidence" value="ECO:0000314"/>
    <property type="project" value="UniProtKB"/>
</dbReference>
<dbReference type="GO" id="GO:0005524">
    <property type="term" value="F:ATP binding"/>
    <property type="evidence" value="ECO:0007669"/>
    <property type="project" value="UniProtKB-KW"/>
</dbReference>
<dbReference type="GO" id="GO:0140094">
    <property type="term" value="F:structural constituent of cytoplasmic lattice"/>
    <property type="evidence" value="ECO:0000314"/>
    <property type="project" value="UniProtKB"/>
</dbReference>
<dbReference type="GO" id="GO:0007015">
    <property type="term" value="P:actin filament organization"/>
    <property type="evidence" value="ECO:0000315"/>
    <property type="project" value="UniProtKB"/>
</dbReference>
<dbReference type="GO" id="GO:0009887">
    <property type="term" value="P:animal organ morphogenesis"/>
    <property type="evidence" value="ECO:0000315"/>
    <property type="project" value="MGI"/>
</dbReference>
<dbReference type="GO" id="GO:0060471">
    <property type="term" value="P:cortical granule exocytosis"/>
    <property type="evidence" value="ECO:0000315"/>
    <property type="project" value="UniProtKB"/>
</dbReference>
<dbReference type="GO" id="GO:0007566">
    <property type="term" value="P:embryo implantation"/>
    <property type="evidence" value="ECO:0000315"/>
    <property type="project" value="MGI"/>
</dbReference>
<dbReference type="GO" id="GO:0051656">
    <property type="term" value="P:establishment of organelle localization"/>
    <property type="evidence" value="ECO:0000315"/>
    <property type="project" value="UniProtKB"/>
</dbReference>
<dbReference type="GO" id="GO:0051293">
    <property type="term" value="P:establishment of spindle localization"/>
    <property type="evidence" value="ECO:0000315"/>
    <property type="project" value="UniProtKB"/>
</dbReference>
<dbReference type="GO" id="GO:0006887">
    <property type="term" value="P:exocytosis"/>
    <property type="evidence" value="ECO:0000315"/>
    <property type="project" value="UniProtKB"/>
</dbReference>
<dbReference type="GO" id="GO:0009566">
    <property type="term" value="P:fertilization"/>
    <property type="evidence" value="ECO:0000315"/>
    <property type="project" value="MGI"/>
</dbReference>
<dbReference type="GO" id="GO:0001701">
    <property type="term" value="P:in utero embryonic development"/>
    <property type="evidence" value="ECO:0000315"/>
    <property type="project" value="MGI"/>
</dbReference>
<dbReference type="GO" id="GO:0040019">
    <property type="term" value="P:positive regulation of embryonic development"/>
    <property type="evidence" value="ECO:0000315"/>
    <property type="project" value="UniProtKB"/>
</dbReference>
<dbReference type="GO" id="GO:0008104">
    <property type="term" value="P:protein localization"/>
    <property type="evidence" value="ECO:0000315"/>
    <property type="project" value="MGI"/>
</dbReference>
<dbReference type="GO" id="GO:0140089">
    <property type="term" value="P:protein storage"/>
    <property type="evidence" value="ECO:0000314"/>
    <property type="project" value="UniProtKB"/>
</dbReference>
<dbReference type="GO" id="GO:0065003">
    <property type="term" value="P:protein-containing complex assembly"/>
    <property type="evidence" value="ECO:0000315"/>
    <property type="project" value="MGI"/>
</dbReference>
<dbReference type="GO" id="GO:0051302">
    <property type="term" value="P:regulation of cell division"/>
    <property type="evidence" value="ECO:0000315"/>
    <property type="project" value="UniProtKB"/>
</dbReference>
<dbReference type="GO" id="GO:0032880">
    <property type="term" value="P:regulation of protein localization"/>
    <property type="evidence" value="ECO:0000315"/>
    <property type="project" value="UniProtKB"/>
</dbReference>
<dbReference type="GO" id="GO:0031647">
    <property type="term" value="P:regulation of protein stability"/>
    <property type="evidence" value="ECO:0000315"/>
    <property type="project" value="MGI"/>
</dbReference>
<dbReference type="GO" id="GO:0043487">
    <property type="term" value="P:regulation of RNA stability"/>
    <property type="evidence" value="ECO:0000315"/>
    <property type="project" value="MGI"/>
</dbReference>
<dbReference type="FunFam" id="3.80.10.10:FF:000862">
    <property type="entry name" value="NACHT, LRR and PYD domains-containing protein 14"/>
    <property type="match status" value="1"/>
</dbReference>
<dbReference type="Gene3D" id="3.40.50.300">
    <property type="entry name" value="P-loop containing nucleotide triphosphate hydrolases"/>
    <property type="match status" value="1"/>
</dbReference>
<dbReference type="Gene3D" id="3.80.10.10">
    <property type="entry name" value="Ribonuclease Inhibitor"/>
    <property type="match status" value="1"/>
</dbReference>
<dbReference type="InterPro" id="IPR001611">
    <property type="entry name" value="Leu-rich_rpt"/>
</dbReference>
<dbReference type="InterPro" id="IPR032675">
    <property type="entry name" value="LRR_dom_sf"/>
</dbReference>
<dbReference type="InterPro" id="IPR007111">
    <property type="entry name" value="NACHT_NTPase"/>
</dbReference>
<dbReference type="InterPro" id="IPR041267">
    <property type="entry name" value="NLRP_HD2"/>
</dbReference>
<dbReference type="InterPro" id="IPR050637">
    <property type="entry name" value="NLRP_innate_immun_reg"/>
</dbReference>
<dbReference type="InterPro" id="IPR041075">
    <property type="entry name" value="NOD1/2_WH"/>
</dbReference>
<dbReference type="InterPro" id="IPR027417">
    <property type="entry name" value="P-loop_NTPase"/>
</dbReference>
<dbReference type="PANTHER" id="PTHR45690">
    <property type="entry name" value="NACHT, LRR AND PYD DOMAINS-CONTAINING PROTEIN 12"/>
    <property type="match status" value="1"/>
</dbReference>
<dbReference type="PANTHER" id="PTHR45690:SF7">
    <property type="entry name" value="NACHT, LRR AND PYD DOMAINS-CONTAINING PROTEIN 5"/>
    <property type="match status" value="1"/>
</dbReference>
<dbReference type="Pfam" id="PF13516">
    <property type="entry name" value="LRR_6"/>
    <property type="match status" value="4"/>
</dbReference>
<dbReference type="Pfam" id="PF05729">
    <property type="entry name" value="NACHT"/>
    <property type="match status" value="1"/>
</dbReference>
<dbReference type="Pfam" id="PF17776">
    <property type="entry name" value="NLRC4_HD2"/>
    <property type="match status" value="1"/>
</dbReference>
<dbReference type="Pfam" id="PF17779">
    <property type="entry name" value="NOD2_WH"/>
    <property type="match status" value="1"/>
</dbReference>
<dbReference type="SMART" id="SM00368">
    <property type="entry name" value="LRR_RI"/>
    <property type="match status" value="12"/>
</dbReference>
<dbReference type="SUPFAM" id="SSF52540">
    <property type="entry name" value="P-loop containing nucleoside triphosphate hydrolases"/>
    <property type="match status" value="1"/>
</dbReference>
<dbReference type="SUPFAM" id="SSF52047">
    <property type="entry name" value="RNI-like"/>
    <property type="match status" value="1"/>
</dbReference>
<dbReference type="PROSITE" id="PS50837">
    <property type="entry name" value="NACHT"/>
    <property type="match status" value="1"/>
</dbReference>
<organism>
    <name type="scientific">Mus musculus</name>
    <name type="common">Mouse</name>
    <dbReference type="NCBI Taxonomy" id="10090"/>
    <lineage>
        <taxon>Eukaryota</taxon>
        <taxon>Metazoa</taxon>
        <taxon>Chordata</taxon>
        <taxon>Craniata</taxon>
        <taxon>Vertebrata</taxon>
        <taxon>Euteleostomi</taxon>
        <taxon>Mammalia</taxon>
        <taxon>Eutheria</taxon>
        <taxon>Euarchontoglires</taxon>
        <taxon>Glires</taxon>
        <taxon>Rodentia</taxon>
        <taxon>Myomorpha</taxon>
        <taxon>Muroidea</taxon>
        <taxon>Muridae</taxon>
        <taxon>Murinae</taxon>
        <taxon>Mus</taxon>
        <taxon>Mus</taxon>
    </lineage>
</organism>
<proteinExistence type="evidence at protein level"/>
<evidence type="ECO:0000250" key="1">
    <source>
        <dbReference type="UniProtKB" id="P59047"/>
    </source>
</evidence>
<evidence type="ECO:0000255" key="2">
    <source>
        <dbReference type="PROSITE-ProRule" id="PRU00136"/>
    </source>
</evidence>
<evidence type="ECO:0000256" key="3">
    <source>
        <dbReference type="SAM" id="MobiDB-lite"/>
    </source>
</evidence>
<evidence type="ECO:0000269" key="4">
    <source>
    </source>
</evidence>
<evidence type="ECO:0000269" key="5">
    <source>
    </source>
</evidence>
<evidence type="ECO:0000269" key="6">
    <source>
    </source>
</evidence>
<evidence type="ECO:0000269" key="7">
    <source>
    </source>
</evidence>
<evidence type="ECO:0000269" key="8">
    <source>
    </source>
</evidence>
<evidence type="ECO:0000269" key="9">
    <source>
    </source>
</evidence>
<evidence type="ECO:0000269" key="10">
    <source>
    </source>
</evidence>
<evidence type="ECO:0000269" key="11">
    <source>
    </source>
</evidence>
<evidence type="ECO:0000269" key="12">
    <source>
    </source>
</evidence>
<evidence type="ECO:0000269" key="13">
    <source>
    </source>
</evidence>
<evidence type="ECO:0000269" key="14">
    <source>
    </source>
</evidence>
<evidence type="ECO:0000269" key="15">
    <source>
    </source>
</evidence>
<evidence type="ECO:0000269" key="16">
    <source>
    </source>
</evidence>
<evidence type="ECO:0000269" key="17">
    <source>
    </source>
</evidence>
<evidence type="ECO:0000269" key="18">
    <source>
    </source>
</evidence>
<evidence type="ECO:0000303" key="19">
    <source>
    </source>
</evidence>
<evidence type="ECO:0000303" key="20">
    <source>
    </source>
</evidence>
<evidence type="ECO:0000303" key="21">
    <source>
    </source>
</evidence>
<evidence type="ECO:0000303" key="22">
    <source>
    </source>
</evidence>
<evidence type="ECO:0000303" key="23">
    <source>
    </source>
</evidence>
<evidence type="ECO:0000303" key="24">
    <source>
    </source>
</evidence>
<evidence type="ECO:0000305" key="25"/>
<evidence type="ECO:0000312" key="26">
    <source>
        <dbReference type="MGI" id="MGI:1345193"/>
    </source>
</evidence>
<evidence type="ECO:0007744" key="27">
    <source>
        <dbReference type="PDB" id="8H93"/>
    </source>
</evidence>
<evidence type="ECO:0007744" key="28">
    <source>
        <dbReference type="PDB" id="8H94"/>
    </source>
</evidence>
<evidence type="ECO:0007744" key="29">
    <source>
        <dbReference type="PDB" id="8H95"/>
    </source>
</evidence>
<evidence type="ECO:0007744" key="30">
    <source>
        <dbReference type="PDB" id="8H96"/>
    </source>
</evidence>
<evidence type="ECO:0007829" key="31">
    <source>
        <dbReference type="PDB" id="8H93"/>
    </source>
</evidence>
<evidence type="ECO:0007829" key="32">
    <source>
        <dbReference type="PDB" id="8H94"/>
    </source>
</evidence>
<evidence type="ECO:0007829" key="33">
    <source>
        <dbReference type="PDB" id="8H95"/>
    </source>
</evidence>
<evidence type="ECO:0007829" key="34">
    <source>
        <dbReference type="PDB" id="8H96"/>
    </source>
</evidence>
<evidence type="ECO:0007829" key="35">
    <source>
        <dbReference type="PDB" id="8XI3"/>
    </source>
</evidence>